<sequence length="215" mass="24558">MVKLYSKFPDVQVLTTKGPIDFYKDIFGKGKWLFLFAHPADFTPVCTTEFVAFSQKYEEFKKLGVELVGLSVDSIYSHIQWLMDIEQRYGVKVPFPVIADPDKKLARMLDALDEASGQTIRIVVLASPDGIIRFVAQYPMEFGRNIDELLRITKAAIVNYKAKVVLPANWQPGQDVIVPPPAIFDEAEMRIKLPNAKAWYLLFKKYEELPPDQKV</sequence>
<gene>
    <name type="ordered locus">STK_05840</name>
</gene>
<accession>Q974S8</accession>
<accession>F9VN42</accession>
<keyword id="KW-0049">Antioxidant</keyword>
<keyword id="KW-0963">Cytoplasm</keyword>
<keyword id="KW-0560">Oxidoreductase</keyword>
<keyword id="KW-0575">Peroxidase</keyword>
<keyword id="KW-0676">Redox-active center</keyword>
<keyword id="KW-1185">Reference proteome</keyword>
<organism>
    <name type="scientific">Sulfurisphaera tokodaii (strain DSM 16993 / JCM 10545 / NBRC 100140 / 7)</name>
    <name type="common">Sulfolobus tokodaii</name>
    <dbReference type="NCBI Taxonomy" id="273063"/>
    <lineage>
        <taxon>Archaea</taxon>
        <taxon>Thermoproteota</taxon>
        <taxon>Thermoprotei</taxon>
        <taxon>Sulfolobales</taxon>
        <taxon>Sulfolobaceae</taxon>
        <taxon>Sulfurisphaera</taxon>
    </lineage>
</organism>
<protein>
    <recommendedName>
        <fullName evidence="1">Peroxiredoxin 1</fullName>
        <ecNumber evidence="1">1.11.1.24</ecNumber>
    </recommendedName>
    <alternativeName>
        <fullName evidence="1">Thioredoxin-dependent peroxiredoxin 1</fullName>
    </alternativeName>
</protein>
<feature type="chain" id="PRO_0000135170" description="Peroxiredoxin 1">
    <location>
        <begin position="1"/>
        <end position="215"/>
    </location>
</feature>
<feature type="domain" description="Thioredoxin" evidence="1">
    <location>
        <begin position="2"/>
        <end position="158"/>
    </location>
</feature>
<feature type="active site" description="Cysteine sulfenic acid (-SOH) intermediate" evidence="1">
    <location>
        <position position="46"/>
    </location>
</feature>
<feature type="binding site" evidence="1">
    <location>
        <position position="121"/>
    </location>
    <ligand>
        <name>substrate</name>
    </ligand>
</feature>
<evidence type="ECO:0000255" key="1">
    <source>
        <dbReference type="HAMAP-Rule" id="MF_00401"/>
    </source>
</evidence>
<proteinExistence type="inferred from homology"/>
<dbReference type="EC" id="1.11.1.24" evidence="1"/>
<dbReference type="EMBL" id="BA000023">
    <property type="protein sequence ID" value="BAK54339.1"/>
    <property type="molecule type" value="Genomic_DNA"/>
</dbReference>
<dbReference type="RefSeq" id="WP_010978562.1">
    <property type="nucleotide sequence ID" value="NC_003106.2"/>
</dbReference>
<dbReference type="SMR" id="Q974S8"/>
<dbReference type="STRING" id="273063.STK_05840"/>
<dbReference type="KEGG" id="sto:STK_05840"/>
<dbReference type="PATRIC" id="fig|273063.9.peg.664"/>
<dbReference type="eggNOG" id="arCOG00312">
    <property type="taxonomic scope" value="Archaea"/>
</dbReference>
<dbReference type="OrthoDB" id="6924at2157"/>
<dbReference type="Proteomes" id="UP000001015">
    <property type="component" value="Chromosome"/>
</dbReference>
<dbReference type="GO" id="GO:0005829">
    <property type="term" value="C:cytosol"/>
    <property type="evidence" value="ECO:0007669"/>
    <property type="project" value="TreeGrafter"/>
</dbReference>
<dbReference type="GO" id="GO:0008379">
    <property type="term" value="F:thioredoxin peroxidase activity"/>
    <property type="evidence" value="ECO:0007669"/>
    <property type="project" value="TreeGrafter"/>
</dbReference>
<dbReference type="GO" id="GO:0045454">
    <property type="term" value="P:cell redox homeostasis"/>
    <property type="evidence" value="ECO:0007669"/>
    <property type="project" value="TreeGrafter"/>
</dbReference>
<dbReference type="GO" id="GO:0033554">
    <property type="term" value="P:cellular response to stress"/>
    <property type="evidence" value="ECO:0007669"/>
    <property type="project" value="TreeGrafter"/>
</dbReference>
<dbReference type="GO" id="GO:0042744">
    <property type="term" value="P:hydrogen peroxide catabolic process"/>
    <property type="evidence" value="ECO:0007669"/>
    <property type="project" value="TreeGrafter"/>
</dbReference>
<dbReference type="GO" id="GO:0006979">
    <property type="term" value="P:response to oxidative stress"/>
    <property type="evidence" value="ECO:0007669"/>
    <property type="project" value="TreeGrafter"/>
</dbReference>
<dbReference type="CDD" id="cd03016">
    <property type="entry name" value="PRX_1cys"/>
    <property type="match status" value="1"/>
</dbReference>
<dbReference type="Gene3D" id="3.30.1020.10">
    <property type="entry name" value="Antioxidant, Horf6, Chain A, domain2"/>
    <property type="match status" value="1"/>
</dbReference>
<dbReference type="Gene3D" id="3.40.30.10">
    <property type="entry name" value="Glutaredoxin"/>
    <property type="match status" value="1"/>
</dbReference>
<dbReference type="HAMAP" id="MF_00401">
    <property type="entry name" value="Peroxiredoxin"/>
    <property type="match status" value="1"/>
</dbReference>
<dbReference type="InterPro" id="IPR000866">
    <property type="entry name" value="AhpC/TSA"/>
</dbReference>
<dbReference type="InterPro" id="IPR050217">
    <property type="entry name" value="Peroxiredoxin"/>
</dbReference>
<dbReference type="InterPro" id="IPR024706">
    <property type="entry name" value="Peroxiredoxin_AhpC-typ"/>
</dbReference>
<dbReference type="InterPro" id="IPR019479">
    <property type="entry name" value="Peroxiredoxin_C"/>
</dbReference>
<dbReference type="InterPro" id="IPR022915">
    <property type="entry name" value="Peroxiredoxin_TDXH"/>
</dbReference>
<dbReference type="InterPro" id="IPR045020">
    <property type="entry name" value="PRX_1cys"/>
</dbReference>
<dbReference type="InterPro" id="IPR036249">
    <property type="entry name" value="Thioredoxin-like_sf"/>
</dbReference>
<dbReference type="InterPro" id="IPR013766">
    <property type="entry name" value="Thioredoxin_domain"/>
</dbReference>
<dbReference type="NCBIfam" id="NF009668">
    <property type="entry name" value="PRK13189.1"/>
    <property type="match status" value="1"/>
</dbReference>
<dbReference type="NCBIfam" id="NF009669">
    <property type="entry name" value="PRK13190.1"/>
    <property type="match status" value="1"/>
</dbReference>
<dbReference type="PANTHER" id="PTHR10681">
    <property type="entry name" value="THIOREDOXIN PEROXIDASE"/>
    <property type="match status" value="1"/>
</dbReference>
<dbReference type="PANTHER" id="PTHR10681:SF128">
    <property type="entry name" value="THIOREDOXIN-DEPENDENT PEROXIDE REDUCTASE, MITOCHONDRIAL"/>
    <property type="match status" value="1"/>
</dbReference>
<dbReference type="Pfam" id="PF10417">
    <property type="entry name" value="1-cysPrx_C"/>
    <property type="match status" value="1"/>
</dbReference>
<dbReference type="Pfam" id="PF00578">
    <property type="entry name" value="AhpC-TSA"/>
    <property type="match status" value="1"/>
</dbReference>
<dbReference type="PIRSF" id="PIRSF000239">
    <property type="entry name" value="AHPC"/>
    <property type="match status" value="1"/>
</dbReference>
<dbReference type="SUPFAM" id="SSF52833">
    <property type="entry name" value="Thioredoxin-like"/>
    <property type="match status" value="1"/>
</dbReference>
<dbReference type="PROSITE" id="PS51352">
    <property type="entry name" value="THIOREDOXIN_2"/>
    <property type="match status" value="1"/>
</dbReference>
<name>TDXH1_SULTO</name>
<comment type="function">
    <text evidence="1">Thiol-specific peroxidase that catalyzes the reduction of hydrogen peroxide and organic hydroperoxides to water and alcohols, respectively. Plays a role in cell protection against oxidative stress by detoxifying peroxides.</text>
</comment>
<comment type="catalytic activity">
    <reaction evidence="1">
        <text>a hydroperoxide + [thioredoxin]-dithiol = an alcohol + [thioredoxin]-disulfide + H2O</text>
        <dbReference type="Rhea" id="RHEA:62620"/>
        <dbReference type="Rhea" id="RHEA-COMP:10698"/>
        <dbReference type="Rhea" id="RHEA-COMP:10700"/>
        <dbReference type="ChEBI" id="CHEBI:15377"/>
        <dbReference type="ChEBI" id="CHEBI:29950"/>
        <dbReference type="ChEBI" id="CHEBI:30879"/>
        <dbReference type="ChEBI" id="CHEBI:35924"/>
        <dbReference type="ChEBI" id="CHEBI:50058"/>
        <dbReference type="EC" id="1.11.1.24"/>
    </reaction>
</comment>
<comment type="subunit">
    <text evidence="1">Homodecamer. Pentamer of dimers that assemble into a ring structure.</text>
</comment>
<comment type="subcellular location">
    <subcellularLocation>
        <location evidence="1">Cytoplasm</location>
    </subcellularLocation>
</comment>
<comment type="miscellaneous">
    <text evidence="1">The active site is a conserved redox-active cysteine residue, the peroxidatic cysteine (C(P)), which makes the nucleophilic attack on the peroxide substrate. The peroxide oxidizes the C(P)-SH to cysteine sulfenic acid (C(P)-SOH), which then reacts with another cysteine residue, the resolving cysteine (C(R)), to form a disulfide bridge. The disulfide is subsequently reduced by an appropriate electron donor to complete the catalytic cycle. In this 1-Cys peroxiredoxin, no C(R) is present and C(P) instead forms a disulfide with a cysteine from another protein or with a small thiol molecule.</text>
</comment>
<comment type="similarity">
    <text evidence="1">Belongs to the peroxiredoxin family. Prx6 subfamily.</text>
</comment>
<reference key="1">
    <citation type="journal article" date="2001" name="DNA Res.">
        <title>Complete genome sequence of an aerobic thermoacidophilic Crenarchaeon, Sulfolobus tokodaii strain7.</title>
        <authorList>
            <person name="Kawarabayasi Y."/>
            <person name="Hino Y."/>
            <person name="Horikawa H."/>
            <person name="Jin-no K."/>
            <person name="Takahashi M."/>
            <person name="Sekine M."/>
            <person name="Baba S."/>
            <person name="Ankai A."/>
            <person name="Kosugi H."/>
            <person name="Hosoyama A."/>
            <person name="Fukui S."/>
            <person name="Nagai Y."/>
            <person name="Nishijima K."/>
            <person name="Otsuka R."/>
            <person name="Nakazawa H."/>
            <person name="Takamiya M."/>
            <person name="Kato Y."/>
            <person name="Yoshizawa T."/>
            <person name="Tanaka T."/>
            <person name="Kudoh Y."/>
            <person name="Yamazaki J."/>
            <person name="Kushida N."/>
            <person name="Oguchi A."/>
            <person name="Aoki K."/>
            <person name="Masuda S."/>
            <person name="Yanagii M."/>
            <person name="Nishimura M."/>
            <person name="Yamagishi A."/>
            <person name="Oshima T."/>
            <person name="Kikuchi H."/>
        </authorList>
    </citation>
    <scope>NUCLEOTIDE SEQUENCE [LARGE SCALE GENOMIC DNA]</scope>
    <source>
        <strain>DSM 16993 / JCM 10545 / NBRC 100140 / 7</strain>
    </source>
</reference>